<reference key="1">
    <citation type="journal article" date="2006" name="BMC Plant Biol.">
        <title>Rapid and accurate pyrosequencing of angiosperm plastid genomes.</title>
        <authorList>
            <person name="Moore M.J."/>
            <person name="Dhingra A."/>
            <person name="Soltis P.S."/>
            <person name="Shaw R."/>
            <person name="Farmerie W.G."/>
            <person name="Folta K.M."/>
            <person name="Soltis D.E."/>
        </authorList>
    </citation>
    <scope>NUCLEOTIDE SEQUENCE [LARGE SCALE GENOMIC DNA]</scope>
</reference>
<proteinExistence type="inferred from homology"/>
<evidence type="ECO:0000255" key="1">
    <source>
        <dbReference type="HAMAP-Rule" id="MF_01346"/>
    </source>
</evidence>
<sequence length="507" mass="55217">MATLRADEISNIIRERIEQYTTEVKIVNTGTVLQVGDGIARIHGLDEVMAGELVEFEEGTIGIALNLESNNVGVVLMGDGLMIQEGSSVKATGRIAQIPVSEAYLGRVINALAKPIDGRGEIPASESRLIESPAPGIISRRSVYEPMQTGLIAIDSMIPIGRGQRELIIGDRQTGKTAVATDTILNQKGQNVICVYVAIGQKASSVAQVVTTFQEQGAMEYTIVVAETADAPATLQYLAPYTGAALAEYFMYRERHTSIIYDDPSKQAQAYRQMSLLLRRPPGREAYPGDVFYLHSRLLERAAKSSSRLGEGSMTALPIVETQAGDVSAYIPTNVISITDGQIFLSADLFNSGIRPAINVGISVSRVGSAAQIKAMKQVAGKLKLELAQFAELEAFAQFASDLDKATQNQLARGQRLRELLKQSQAAPLTVGEQILTIYTGTNGYLDSLEIGQVKKFLVELRTYLKTNKPQFQEIISSTKTLTEEAEVLLKEAIQEQTERFILQEQT</sequence>
<dbReference type="EC" id="7.1.2.2" evidence="1"/>
<dbReference type="EMBL" id="DQ923117">
    <property type="protein sequence ID" value="ABI49848.1"/>
    <property type="molecule type" value="Genomic_DNA"/>
</dbReference>
<dbReference type="RefSeq" id="YP_740635.1">
    <property type="nucleotide sequence ID" value="NC_008336.1"/>
</dbReference>
<dbReference type="SMR" id="Q09FX6"/>
<dbReference type="GeneID" id="4271670"/>
<dbReference type="GO" id="GO:0009535">
    <property type="term" value="C:chloroplast thylakoid membrane"/>
    <property type="evidence" value="ECO:0007669"/>
    <property type="project" value="UniProtKB-SubCell"/>
</dbReference>
<dbReference type="GO" id="GO:0045259">
    <property type="term" value="C:proton-transporting ATP synthase complex"/>
    <property type="evidence" value="ECO:0007669"/>
    <property type="project" value="UniProtKB-KW"/>
</dbReference>
<dbReference type="GO" id="GO:0043531">
    <property type="term" value="F:ADP binding"/>
    <property type="evidence" value="ECO:0007669"/>
    <property type="project" value="TreeGrafter"/>
</dbReference>
<dbReference type="GO" id="GO:0005524">
    <property type="term" value="F:ATP binding"/>
    <property type="evidence" value="ECO:0007669"/>
    <property type="project" value="UniProtKB-UniRule"/>
</dbReference>
<dbReference type="GO" id="GO:0046933">
    <property type="term" value="F:proton-transporting ATP synthase activity, rotational mechanism"/>
    <property type="evidence" value="ECO:0007669"/>
    <property type="project" value="UniProtKB-UniRule"/>
</dbReference>
<dbReference type="CDD" id="cd18113">
    <property type="entry name" value="ATP-synt_F1_alpha_C"/>
    <property type="match status" value="1"/>
</dbReference>
<dbReference type="CDD" id="cd18116">
    <property type="entry name" value="ATP-synt_F1_alpha_N"/>
    <property type="match status" value="1"/>
</dbReference>
<dbReference type="CDD" id="cd01132">
    <property type="entry name" value="F1-ATPase_alpha_CD"/>
    <property type="match status" value="1"/>
</dbReference>
<dbReference type="FunFam" id="1.20.150.20:FF:000001">
    <property type="entry name" value="ATP synthase subunit alpha"/>
    <property type="match status" value="1"/>
</dbReference>
<dbReference type="FunFam" id="2.40.30.20:FF:000001">
    <property type="entry name" value="ATP synthase subunit alpha"/>
    <property type="match status" value="1"/>
</dbReference>
<dbReference type="FunFam" id="3.40.50.300:FF:000002">
    <property type="entry name" value="ATP synthase subunit alpha"/>
    <property type="match status" value="1"/>
</dbReference>
<dbReference type="Gene3D" id="2.40.30.20">
    <property type="match status" value="1"/>
</dbReference>
<dbReference type="Gene3D" id="1.20.150.20">
    <property type="entry name" value="ATP synthase alpha/beta chain, C-terminal domain"/>
    <property type="match status" value="1"/>
</dbReference>
<dbReference type="Gene3D" id="3.40.50.300">
    <property type="entry name" value="P-loop containing nucleotide triphosphate hydrolases"/>
    <property type="match status" value="1"/>
</dbReference>
<dbReference type="HAMAP" id="MF_01346">
    <property type="entry name" value="ATP_synth_alpha_bact"/>
    <property type="match status" value="1"/>
</dbReference>
<dbReference type="InterPro" id="IPR023366">
    <property type="entry name" value="ATP_synth_asu-like_sf"/>
</dbReference>
<dbReference type="InterPro" id="IPR000793">
    <property type="entry name" value="ATP_synth_asu_C"/>
</dbReference>
<dbReference type="InterPro" id="IPR038376">
    <property type="entry name" value="ATP_synth_asu_C_sf"/>
</dbReference>
<dbReference type="InterPro" id="IPR033732">
    <property type="entry name" value="ATP_synth_F1_a_nt-bd_dom"/>
</dbReference>
<dbReference type="InterPro" id="IPR005294">
    <property type="entry name" value="ATP_synth_F1_asu"/>
</dbReference>
<dbReference type="InterPro" id="IPR020003">
    <property type="entry name" value="ATPase_a/bsu_AS"/>
</dbReference>
<dbReference type="InterPro" id="IPR004100">
    <property type="entry name" value="ATPase_F1/V1/A1_a/bsu_N"/>
</dbReference>
<dbReference type="InterPro" id="IPR036121">
    <property type="entry name" value="ATPase_F1/V1/A1_a/bsu_N_sf"/>
</dbReference>
<dbReference type="InterPro" id="IPR000194">
    <property type="entry name" value="ATPase_F1/V1/A1_a/bsu_nucl-bd"/>
</dbReference>
<dbReference type="InterPro" id="IPR027417">
    <property type="entry name" value="P-loop_NTPase"/>
</dbReference>
<dbReference type="NCBIfam" id="TIGR00962">
    <property type="entry name" value="atpA"/>
    <property type="match status" value="1"/>
</dbReference>
<dbReference type="NCBIfam" id="NF009884">
    <property type="entry name" value="PRK13343.1"/>
    <property type="match status" value="1"/>
</dbReference>
<dbReference type="PANTHER" id="PTHR48082">
    <property type="entry name" value="ATP SYNTHASE SUBUNIT ALPHA, MITOCHONDRIAL"/>
    <property type="match status" value="1"/>
</dbReference>
<dbReference type="PANTHER" id="PTHR48082:SF2">
    <property type="entry name" value="ATP SYNTHASE SUBUNIT ALPHA, MITOCHONDRIAL"/>
    <property type="match status" value="1"/>
</dbReference>
<dbReference type="Pfam" id="PF00006">
    <property type="entry name" value="ATP-synt_ab"/>
    <property type="match status" value="1"/>
</dbReference>
<dbReference type="Pfam" id="PF00306">
    <property type="entry name" value="ATP-synt_ab_C"/>
    <property type="match status" value="1"/>
</dbReference>
<dbReference type="Pfam" id="PF02874">
    <property type="entry name" value="ATP-synt_ab_N"/>
    <property type="match status" value="1"/>
</dbReference>
<dbReference type="PIRSF" id="PIRSF039088">
    <property type="entry name" value="F_ATPase_subunit_alpha"/>
    <property type="match status" value="1"/>
</dbReference>
<dbReference type="SUPFAM" id="SSF47917">
    <property type="entry name" value="C-terminal domain of alpha and beta subunits of F1 ATP synthase"/>
    <property type="match status" value="1"/>
</dbReference>
<dbReference type="SUPFAM" id="SSF50615">
    <property type="entry name" value="N-terminal domain of alpha and beta subunits of F1 ATP synthase"/>
    <property type="match status" value="1"/>
</dbReference>
<dbReference type="SUPFAM" id="SSF52540">
    <property type="entry name" value="P-loop containing nucleoside triphosphate hydrolases"/>
    <property type="match status" value="1"/>
</dbReference>
<dbReference type="PROSITE" id="PS00152">
    <property type="entry name" value="ATPASE_ALPHA_BETA"/>
    <property type="match status" value="1"/>
</dbReference>
<name>ATPA_NANDO</name>
<keyword id="KW-0066">ATP synthesis</keyword>
<keyword id="KW-0067">ATP-binding</keyword>
<keyword id="KW-0139">CF(1)</keyword>
<keyword id="KW-0150">Chloroplast</keyword>
<keyword id="KW-0375">Hydrogen ion transport</keyword>
<keyword id="KW-0406">Ion transport</keyword>
<keyword id="KW-0472">Membrane</keyword>
<keyword id="KW-0547">Nucleotide-binding</keyword>
<keyword id="KW-0934">Plastid</keyword>
<keyword id="KW-0793">Thylakoid</keyword>
<keyword id="KW-1278">Translocase</keyword>
<keyword id="KW-0813">Transport</keyword>
<protein>
    <recommendedName>
        <fullName evidence="1">ATP synthase subunit alpha, chloroplastic</fullName>
        <ecNumber evidence="1">7.1.2.2</ecNumber>
    </recommendedName>
    <alternativeName>
        <fullName evidence="1">ATP synthase F1 sector subunit alpha</fullName>
    </alternativeName>
    <alternativeName>
        <fullName evidence="1">F-ATPase subunit alpha</fullName>
    </alternativeName>
</protein>
<organism>
    <name type="scientific">Nandina domestica</name>
    <name type="common">Heavenly bamboo</name>
    <dbReference type="NCBI Taxonomy" id="41776"/>
    <lineage>
        <taxon>Eukaryota</taxon>
        <taxon>Viridiplantae</taxon>
        <taxon>Streptophyta</taxon>
        <taxon>Embryophyta</taxon>
        <taxon>Tracheophyta</taxon>
        <taxon>Spermatophyta</taxon>
        <taxon>Magnoliopsida</taxon>
        <taxon>Ranunculales</taxon>
        <taxon>Berberidaceae</taxon>
        <taxon>Nandinoideae</taxon>
        <taxon>Nandineae</taxon>
        <taxon>Nandina</taxon>
    </lineage>
</organism>
<feature type="chain" id="PRO_0000339097" description="ATP synthase subunit alpha, chloroplastic">
    <location>
        <begin position="1"/>
        <end position="507"/>
    </location>
</feature>
<feature type="binding site" evidence="1">
    <location>
        <begin position="170"/>
        <end position="177"/>
    </location>
    <ligand>
        <name>ATP</name>
        <dbReference type="ChEBI" id="CHEBI:30616"/>
    </ligand>
</feature>
<feature type="site" description="Required for activity" evidence="1">
    <location>
        <position position="363"/>
    </location>
</feature>
<accession>Q09FX6</accession>
<gene>
    <name evidence="1" type="primary">atpA</name>
</gene>
<geneLocation type="chloroplast"/>
<comment type="function">
    <text evidence="1">Produces ATP from ADP in the presence of a proton gradient across the membrane. The alpha chain is a regulatory subunit.</text>
</comment>
<comment type="catalytic activity">
    <reaction evidence="1">
        <text>ATP + H2O + 4 H(+)(in) = ADP + phosphate + 5 H(+)(out)</text>
        <dbReference type="Rhea" id="RHEA:57720"/>
        <dbReference type="ChEBI" id="CHEBI:15377"/>
        <dbReference type="ChEBI" id="CHEBI:15378"/>
        <dbReference type="ChEBI" id="CHEBI:30616"/>
        <dbReference type="ChEBI" id="CHEBI:43474"/>
        <dbReference type="ChEBI" id="CHEBI:456216"/>
        <dbReference type="EC" id="7.1.2.2"/>
    </reaction>
</comment>
<comment type="subunit">
    <text evidence="1">F-type ATPases have 2 components, CF(1) - the catalytic core - and CF(0) - the membrane proton channel. CF(1) has five subunits: alpha(3), beta(3), gamma(1), delta(1), epsilon(1). CF(0) has four main subunits: a, b, b' and c.</text>
</comment>
<comment type="subcellular location">
    <subcellularLocation>
        <location evidence="1">Plastid</location>
        <location evidence="1">Chloroplast thylakoid membrane</location>
        <topology evidence="1">Peripheral membrane protein</topology>
    </subcellularLocation>
</comment>
<comment type="similarity">
    <text evidence="1">Belongs to the ATPase alpha/beta chains family.</text>
</comment>